<reference key="1">
    <citation type="journal article" date="2003" name="Nature">
        <title>Unique physiological and pathogenic features of Leptospira interrogans revealed by whole-genome sequencing.</title>
        <authorList>
            <person name="Ren S.-X."/>
            <person name="Fu G."/>
            <person name="Jiang X.-G."/>
            <person name="Zeng R."/>
            <person name="Miao Y.-G."/>
            <person name="Xu H."/>
            <person name="Zhang Y.-X."/>
            <person name="Xiong H."/>
            <person name="Lu G."/>
            <person name="Lu L.-F."/>
            <person name="Jiang H.-Q."/>
            <person name="Jia J."/>
            <person name="Tu Y.-F."/>
            <person name="Jiang J.-X."/>
            <person name="Gu W.-Y."/>
            <person name="Zhang Y.-Q."/>
            <person name="Cai Z."/>
            <person name="Sheng H.-H."/>
            <person name="Yin H.-F."/>
            <person name="Zhang Y."/>
            <person name="Zhu G.-F."/>
            <person name="Wan M."/>
            <person name="Huang H.-L."/>
            <person name="Qian Z."/>
            <person name="Wang S.-Y."/>
            <person name="Ma W."/>
            <person name="Yao Z.-J."/>
            <person name="Shen Y."/>
            <person name="Qiang B.-Q."/>
            <person name="Xia Q.-C."/>
            <person name="Guo X.-K."/>
            <person name="Danchin A."/>
            <person name="Saint Girons I."/>
            <person name="Somerville R.L."/>
            <person name="Wen Y.-M."/>
            <person name="Shi M.-H."/>
            <person name="Chen Z."/>
            <person name="Xu J.-G."/>
            <person name="Zhao G.-P."/>
        </authorList>
    </citation>
    <scope>NUCLEOTIDE SEQUENCE [LARGE SCALE GENOMIC DNA]</scope>
    <source>
        <strain>56601</strain>
    </source>
</reference>
<keyword id="KW-0067">ATP-binding</keyword>
<keyword id="KW-0963">Cytoplasm</keyword>
<keyword id="KW-0436">Ligase</keyword>
<keyword id="KW-0547">Nucleotide-binding</keyword>
<keyword id="KW-0566">Pantothenate biosynthesis</keyword>
<keyword id="KW-1185">Reference proteome</keyword>
<comment type="function">
    <text evidence="1">Catalyzes the condensation of pantoate with beta-alanine in an ATP-dependent reaction via a pantoyl-adenylate intermediate.</text>
</comment>
<comment type="catalytic activity">
    <reaction evidence="1">
        <text>(R)-pantoate + beta-alanine + ATP = (R)-pantothenate + AMP + diphosphate + H(+)</text>
        <dbReference type="Rhea" id="RHEA:10912"/>
        <dbReference type="ChEBI" id="CHEBI:15378"/>
        <dbReference type="ChEBI" id="CHEBI:15980"/>
        <dbReference type="ChEBI" id="CHEBI:29032"/>
        <dbReference type="ChEBI" id="CHEBI:30616"/>
        <dbReference type="ChEBI" id="CHEBI:33019"/>
        <dbReference type="ChEBI" id="CHEBI:57966"/>
        <dbReference type="ChEBI" id="CHEBI:456215"/>
        <dbReference type="EC" id="6.3.2.1"/>
    </reaction>
</comment>
<comment type="pathway">
    <text evidence="1">Cofactor biosynthesis; (R)-pantothenate biosynthesis; (R)-pantothenate from (R)-pantoate and beta-alanine: step 1/1.</text>
</comment>
<comment type="subunit">
    <text evidence="1">Homodimer.</text>
</comment>
<comment type="subcellular location">
    <subcellularLocation>
        <location evidence="1">Cytoplasm</location>
    </subcellularLocation>
</comment>
<comment type="miscellaneous">
    <text evidence="1">The reaction proceeds by a bi uni uni bi ping pong mechanism.</text>
</comment>
<comment type="similarity">
    <text evidence="1">Belongs to the pantothenate synthetase family.</text>
</comment>
<protein>
    <recommendedName>
        <fullName evidence="1">Pantothenate synthetase</fullName>
        <shortName evidence="1">PS</shortName>
        <ecNumber evidence="1">6.3.2.1</ecNumber>
    </recommendedName>
    <alternativeName>
        <fullName evidence="1">Pantoate--beta-alanine ligase</fullName>
    </alternativeName>
    <alternativeName>
        <fullName evidence="1">Pantoate-activating enzyme</fullName>
    </alternativeName>
</protein>
<proteinExistence type="inferred from homology"/>
<organism>
    <name type="scientific">Leptospira interrogans serogroup Icterohaemorrhagiae serovar Lai (strain 56601)</name>
    <dbReference type="NCBI Taxonomy" id="189518"/>
    <lineage>
        <taxon>Bacteria</taxon>
        <taxon>Pseudomonadati</taxon>
        <taxon>Spirochaetota</taxon>
        <taxon>Spirochaetia</taxon>
        <taxon>Leptospirales</taxon>
        <taxon>Leptospiraceae</taxon>
        <taxon>Leptospira</taxon>
    </lineage>
</organism>
<dbReference type="EC" id="6.3.2.1" evidence="1"/>
<dbReference type="EMBL" id="AE010300">
    <property type="protein sequence ID" value="AAN49713.1"/>
    <property type="molecule type" value="Genomic_DNA"/>
</dbReference>
<dbReference type="RefSeq" id="NP_712695.1">
    <property type="nucleotide sequence ID" value="NC_004342.2"/>
</dbReference>
<dbReference type="RefSeq" id="WP_000634432.1">
    <property type="nucleotide sequence ID" value="NC_004342.2"/>
</dbReference>
<dbReference type="SMR" id="Q8F394"/>
<dbReference type="FunCoup" id="Q8F394">
    <property type="interactions" value="498"/>
</dbReference>
<dbReference type="STRING" id="189518.LA_2514"/>
<dbReference type="PaxDb" id="189518-LA_2514"/>
<dbReference type="EnsemblBacteria" id="AAN49713">
    <property type="protein sequence ID" value="AAN49713"/>
    <property type="gene ID" value="LA_2514"/>
</dbReference>
<dbReference type="KEGG" id="lil:LA_2514"/>
<dbReference type="PATRIC" id="fig|189518.3.peg.2496"/>
<dbReference type="HOGENOM" id="CLU_047148_0_0_12"/>
<dbReference type="InParanoid" id="Q8F394"/>
<dbReference type="OrthoDB" id="9773087at2"/>
<dbReference type="UniPathway" id="UPA00028">
    <property type="reaction ID" value="UER00005"/>
</dbReference>
<dbReference type="Proteomes" id="UP000001408">
    <property type="component" value="Chromosome I"/>
</dbReference>
<dbReference type="GO" id="GO:0005829">
    <property type="term" value="C:cytosol"/>
    <property type="evidence" value="ECO:0000318"/>
    <property type="project" value="GO_Central"/>
</dbReference>
<dbReference type="GO" id="GO:0005524">
    <property type="term" value="F:ATP binding"/>
    <property type="evidence" value="ECO:0007669"/>
    <property type="project" value="UniProtKB-KW"/>
</dbReference>
<dbReference type="GO" id="GO:0004592">
    <property type="term" value="F:pantoate-beta-alanine ligase activity"/>
    <property type="evidence" value="ECO:0000318"/>
    <property type="project" value="GO_Central"/>
</dbReference>
<dbReference type="GO" id="GO:0015940">
    <property type="term" value="P:pantothenate biosynthetic process"/>
    <property type="evidence" value="ECO:0000318"/>
    <property type="project" value="GO_Central"/>
</dbReference>
<dbReference type="CDD" id="cd00560">
    <property type="entry name" value="PanC"/>
    <property type="match status" value="1"/>
</dbReference>
<dbReference type="FunFam" id="3.30.1300.10:FF:000009">
    <property type="entry name" value="Pantothenate synthetase"/>
    <property type="match status" value="1"/>
</dbReference>
<dbReference type="FunFam" id="3.40.50.620:FF:000114">
    <property type="entry name" value="Pantothenate synthetase"/>
    <property type="match status" value="1"/>
</dbReference>
<dbReference type="Gene3D" id="3.40.50.620">
    <property type="entry name" value="HUPs"/>
    <property type="match status" value="1"/>
</dbReference>
<dbReference type="Gene3D" id="3.30.1300.10">
    <property type="entry name" value="Pantoate-beta-alanine ligase, C-terminal domain"/>
    <property type="match status" value="1"/>
</dbReference>
<dbReference type="HAMAP" id="MF_00158">
    <property type="entry name" value="PanC"/>
    <property type="match status" value="1"/>
</dbReference>
<dbReference type="InterPro" id="IPR004821">
    <property type="entry name" value="Cyt_trans-like"/>
</dbReference>
<dbReference type="InterPro" id="IPR003721">
    <property type="entry name" value="Pantoate_ligase"/>
</dbReference>
<dbReference type="InterPro" id="IPR042176">
    <property type="entry name" value="Pantoate_ligase_C"/>
</dbReference>
<dbReference type="InterPro" id="IPR014729">
    <property type="entry name" value="Rossmann-like_a/b/a_fold"/>
</dbReference>
<dbReference type="NCBIfam" id="TIGR00125">
    <property type="entry name" value="cyt_tran_rel"/>
    <property type="match status" value="1"/>
</dbReference>
<dbReference type="NCBIfam" id="TIGR00018">
    <property type="entry name" value="panC"/>
    <property type="match status" value="1"/>
</dbReference>
<dbReference type="PANTHER" id="PTHR21299">
    <property type="entry name" value="CYTIDYLATE KINASE/PANTOATE-BETA-ALANINE LIGASE"/>
    <property type="match status" value="1"/>
</dbReference>
<dbReference type="PANTHER" id="PTHR21299:SF1">
    <property type="entry name" value="PANTOATE--BETA-ALANINE LIGASE"/>
    <property type="match status" value="1"/>
</dbReference>
<dbReference type="Pfam" id="PF02569">
    <property type="entry name" value="Pantoate_ligase"/>
    <property type="match status" value="1"/>
</dbReference>
<dbReference type="SUPFAM" id="SSF52374">
    <property type="entry name" value="Nucleotidylyl transferase"/>
    <property type="match status" value="1"/>
</dbReference>
<evidence type="ECO:0000255" key="1">
    <source>
        <dbReference type="HAMAP-Rule" id="MF_00158"/>
    </source>
</evidence>
<feature type="chain" id="PRO_0000305474" description="Pantothenate synthetase">
    <location>
        <begin position="1"/>
        <end position="285"/>
    </location>
</feature>
<feature type="active site" description="Proton donor" evidence="1">
    <location>
        <position position="37"/>
    </location>
</feature>
<feature type="binding site" evidence="1">
    <location>
        <begin position="30"/>
        <end position="37"/>
    </location>
    <ligand>
        <name>ATP</name>
        <dbReference type="ChEBI" id="CHEBI:30616"/>
    </ligand>
</feature>
<feature type="binding site" evidence="1">
    <location>
        <position position="61"/>
    </location>
    <ligand>
        <name>(R)-pantoate</name>
        <dbReference type="ChEBI" id="CHEBI:15980"/>
    </ligand>
</feature>
<feature type="binding site" evidence="1">
    <location>
        <position position="61"/>
    </location>
    <ligand>
        <name>beta-alanine</name>
        <dbReference type="ChEBI" id="CHEBI:57966"/>
    </ligand>
</feature>
<feature type="binding site" evidence="1">
    <location>
        <begin position="148"/>
        <end position="151"/>
    </location>
    <ligand>
        <name>ATP</name>
        <dbReference type="ChEBI" id="CHEBI:30616"/>
    </ligand>
</feature>
<feature type="binding site" evidence="1">
    <location>
        <position position="154"/>
    </location>
    <ligand>
        <name>(R)-pantoate</name>
        <dbReference type="ChEBI" id="CHEBI:15980"/>
    </ligand>
</feature>
<feature type="binding site" evidence="1">
    <location>
        <position position="177"/>
    </location>
    <ligand>
        <name>ATP</name>
        <dbReference type="ChEBI" id="CHEBI:30616"/>
    </ligand>
</feature>
<feature type="binding site" evidence="1">
    <location>
        <begin position="185"/>
        <end position="188"/>
    </location>
    <ligand>
        <name>ATP</name>
        <dbReference type="ChEBI" id="CHEBI:30616"/>
    </ligand>
</feature>
<accession>Q8F394</accession>
<sequence length="285" mass="32087">MIVCKTPEEVLDQVRLWKAQGKRIGFVPTMGYLHEGHASLFEECISKADKTVVSIFVNPAQFNDPEDYAKYPVNTEGDLKLCESKKVDLVFLPNKETIYPDGIPDIVLKIPNLMKSLCAVSRPGHFEGVLLVIFRLFHFVQPDFAFFGKKDYQQYLLIREFCNTLAFPIEVIGCETVRSSQGLALSSRNSRLSETEKEESLLIYRSLKLGENQIFSGIKNPLLVKEIMKDVLDSSSKIRLDYLEILNADTLDPLEVLEGEILLAIAAFIGPVRLIDNLTLSVPTS</sequence>
<name>PANC_LEPIN</name>
<gene>
    <name evidence="1" type="primary">panC</name>
    <name type="ordered locus">LA_2514</name>
</gene>